<accession>Q089Q4</accession>
<organism>
    <name type="scientific">Shewanella frigidimarina (strain NCIMB 400)</name>
    <dbReference type="NCBI Taxonomy" id="318167"/>
    <lineage>
        <taxon>Bacteria</taxon>
        <taxon>Pseudomonadati</taxon>
        <taxon>Pseudomonadota</taxon>
        <taxon>Gammaproteobacteria</taxon>
        <taxon>Alteromonadales</taxon>
        <taxon>Shewanellaceae</taxon>
        <taxon>Shewanella</taxon>
    </lineage>
</organism>
<evidence type="ECO:0000255" key="1">
    <source>
        <dbReference type="HAMAP-Rule" id="MF_01325"/>
    </source>
</evidence>
<evidence type="ECO:0000305" key="2"/>
<protein>
    <recommendedName>
        <fullName evidence="1">Large ribosomal subunit protein uL3</fullName>
    </recommendedName>
    <alternativeName>
        <fullName evidence="2">50S ribosomal protein L3</fullName>
    </alternativeName>
</protein>
<feature type="chain" id="PRO_1000052136" description="Large ribosomal subunit protein uL3">
    <location>
        <begin position="1"/>
        <end position="212"/>
    </location>
</feature>
<feature type="modified residue" description="N5-methylglutamine" evidence="1">
    <location>
        <position position="153"/>
    </location>
</feature>
<gene>
    <name evidence="1" type="primary">rplC</name>
    <name type="ordered locus">Sfri_0148</name>
</gene>
<dbReference type="EMBL" id="CP000447">
    <property type="protein sequence ID" value="ABI70011.1"/>
    <property type="molecule type" value="Genomic_DNA"/>
</dbReference>
<dbReference type="RefSeq" id="WP_011635640.1">
    <property type="nucleotide sequence ID" value="NC_008345.1"/>
</dbReference>
<dbReference type="SMR" id="Q089Q4"/>
<dbReference type="STRING" id="318167.Sfri_0148"/>
<dbReference type="KEGG" id="sfr:Sfri_0148"/>
<dbReference type="eggNOG" id="COG0087">
    <property type="taxonomic scope" value="Bacteria"/>
</dbReference>
<dbReference type="HOGENOM" id="CLU_044142_4_1_6"/>
<dbReference type="OrthoDB" id="9806135at2"/>
<dbReference type="Proteomes" id="UP000000684">
    <property type="component" value="Chromosome"/>
</dbReference>
<dbReference type="GO" id="GO:0022625">
    <property type="term" value="C:cytosolic large ribosomal subunit"/>
    <property type="evidence" value="ECO:0007669"/>
    <property type="project" value="TreeGrafter"/>
</dbReference>
<dbReference type="GO" id="GO:0019843">
    <property type="term" value="F:rRNA binding"/>
    <property type="evidence" value="ECO:0007669"/>
    <property type="project" value="UniProtKB-UniRule"/>
</dbReference>
<dbReference type="GO" id="GO:0003735">
    <property type="term" value="F:structural constituent of ribosome"/>
    <property type="evidence" value="ECO:0007669"/>
    <property type="project" value="InterPro"/>
</dbReference>
<dbReference type="GO" id="GO:0006412">
    <property type="term" value="P:translation"/>
    <property type="evidence" value="ECO:0007669"/>
    <property type="project" value="UniProtKB-UniRule"/>
</dbReference>
<dbReference type="FunFam" id="2.40.30.10:FF:000004">
    <property type="entry name" value="50S ribosomal protein L3"/>
    <property type="match status" value="1"/>
</dbReference>
<dbReference type="FunFam" id="3.30.160.810:FF:000001">
    <property type="entry name" value="50S ribosomal protein L3"/>
    <property type="match status" value="1"/>
</dbReference>
<dbReference type="Gene3D" id="3.30.160.810">
    <property type="match status" value="1"/>
</dbReference>
<dbReference type="Gene3D" id="2.40.30.10">
    <property type="entry name" value="Translation factors"/>
    <property type="match status" value="1"/>
</dbReference>
<dbReference type="HAMAP" id="MF_01325_B">
    <property type="entry name" value="Ribosomal_uL3_B"/>
    <property type="match status" value="1"/>
</dbReference>
<dbReference type="InterPro" id="IPR000597">
    <property type="entry name" value="Ribosomal_uL3"/>
</dbReference>
<dbReference type="InterPro" id="IPR019927">
    <property type="entry name" value="Ribosomal_uL3_bac/org-type"/>
</dbReference>
<dbReference type="InterPro" id="IPR019926">
    <property type="entry name" value="Ribosomal_uL3_CS"/>
</dbReference>
<dbReference type="InterPro" id="IPR009000">
    <property type="entry name" value="Transl_B-barrel_sf"/>
</dbReference>
<dbReference type="NCBIfam" id="TIGR03625">
    <property type="entry name" value="L3_bact"/>
    <property type="match status" value="1"/>
</dbReference>
<dbReference type="PANTHER" id="PTHR11229">
    <property type="entry name" value="50S RIBOSOMAL PROTEIN L3"/>
    <property type="match status" value="1"/>
</dbReference>
<dbReference type="PANTHER" id="PTHR11229:SF16">
    <property type="entry name" value="LARGE RIBOSOMAL SUBUNIT PROTEIN UL3C"/>
    <property type="match status" value="1"/>
</dbReference>
<dbReference type="Pfam" id="PF00297">
    <property type="entry name" value="Ribosomal_L3"/>
    <property type="match status" value="1"/>
</dbReference>
<dbReference type="SUPFAM" id="SSF50447">
    <property type="entry name" value="Translation proteins"/>
    <property type="match status" value="1"/>
</dbReference>
<dbReference type="PROSITE" id="PS00474">
    <property type="entry name" value="RIBOSOMAL_L3"/>
    <property type="match status" value="1"/>
</dbReference>
<comment type="function">
    <text evidence="1">One of the primary rRNA binding proteins, it binds directly near the 3'-end of the 23S rRNA, where it nucleates assembly of the 50S subunit.</text>
</comment>
<comment type="subunit">
    <text evidence="1">Part of the 50S ribosomal subunit. Forms a cluster with proteins L14 and L19.</text>
</comment>
<comment type="PTM">
    <text evidence="1">Methylated by PrmB.</text>
</comment>
<comment type="similarity">
    <text evidence="1">Belongs to the universal ribosomal protein uL3 family.</text>
</comment>
<keyword id="KW-0488">Methylation</keyword>
<keyword id="KW-1185">Reference proteome</keyword>
<keyword id="KW-0687">Ribonucleoprotein</keyword>
<keyword id="KW-0689">Ribosomal protein</keyword>
<keyword id="KW-0694">RNA-binding</keyword>
<keyword id="KW-0699">rRNA-binding</keyword>
<reference key="1">
    <citation type="submission" date="2006-08" db="EMBL/GenBank/DDBJ databases">
        <title>Complete sequence of Shewanella frigidimarina NCIMB 400.</title>
        <authorList>
            <consortium name="US DOE Joint Genome Institute"/>
            <person name="Copeland A."/>
            <person name="Lucas S."/>
            <person name="Lapidus A."/>
            <person name="Barry K."/>
            <person name="Detter J.C."/>
            <person name="Glavina del Rio T."/>
            <person name="Hammon N."/>
            <person name="Israni S."/>
            <person name="Dalin E."/>
            <person name="Tice H."/>
            <person name="Pitluck S."/>
            <person name="Fredrickson J.K."/>
            <person name="Kolker E."/>
            <person name="McCuel L.A."/>
            <person name="DiChristina T."/>
            <person name="Nealson K.H."/>
            <person name="Newman D."/>
            <person name="Tiedje J.M."/>
            <person name="Zhou J."/>
            <person name="Romine M.F."/>
            <person name="Culley D.E."/>
            <person name="Serres M."/>
            <person name="Chertkov O."/>
            <person name="Brettin T."/>
            <person name="Bruce D."/>
            <person name="Han C."/>
            <person name="Tapia R."/>
            <person name="Gilna P."/>
            <person name="Schmutz J."/>
            <person name="Larimer F."/>
            <person name="Land M."/>
            <person name="Hauser L."/>
            <person name="Kyrpides N."/>
            <person name="Mikhailova N."/>
            <person name="Richardson P."/>
        </authorList>
    </citation>
    <scope>NUCLEOTIDE SEQUENCE [LARGE SCALE GENOMIC DNA]</scope>
    <source>
        <strain>NCIMB 400</strain>
    </source>
</reference>
<proteinExistence type="inferred from homology"/>
<sequence>MAIGLIGRKVGMTRIFTEDGTSIPVTVIEIAGNRVTQVKTLETDGYRALQVTTGTKKANRITKAEAGHFAKGGVEAGRGLWEMRLADGEGEGIEVGAEINVDIFADTVKVDVTGQSKGKGFQGGVKRWNFRTQDMTHGNSLAHRSNGSIGQNQTPGRVFKGKKMSGHMGAEQVTTQNLHVVRVDAERNLLLVRGAVPGATNGDLIIKPAVKA</sequence>
<name>RL3_SHEFN</name>